<keyword id="KW-0240">DNA-directed RNA polymerase</keyword>
<keyword id="KW-0548">Nucleotidyltransferase</keyword>
<keyword id="KW-0804">Transcription</keyword>
<keyword id="KW-0808">Transferase</keyword>
<feature type="chain" id="PRO_0000296867" description="DNA-directed RNA polymerase subunit alpha">
    <location>
        <begin position="1"/>
        <end position="329"/>
    </location>
</feature>
<feature type="region of interest" description="Alpha N-terminal domain (alpha-NTD)" evidence="1">
    <location>
        <begin position="1"/>
        <end position="234"/>
    </location>
</feature>
<feature type="region of interest" description="Alpha C-terminal domain (alpha-CTD)" evidence="1">
    <location>
        <begin position="248"/>
        <end position="329"/>
    </location>
</feature>
<accession>A0KRP9</accession>
<proteinExistence type="inferred from homology"/>
<comment type="function">
    <text evidence="1">DNA-dependent RNA polymerase catalyzes the transcription of DNA into RNA using the four ribonucleoside triphosphates as substrates.</text>
</comment>
<comment type="catalytic activity">
    <reaction evidence="1">
        <text>RNA(n) + a ribonucleoside 5'-triphosphate = RNA(n+1) + diphosphate</text>
        <dbReference type="Rhea" id="RHEA:21248"/>
        <dbReference type="Rhea" id="RHEA-COMP:14527"/>
        <dbReference type="Rhea" id="RHEA-COMP:17342"/>
        <dbReference type="ChEBI" id="CHEBI:33019"/>
        <dbReference type="ChEBI" id="CHEBI:61557"/>
        <dbReference type="ChEBI" id="CHEBI:140395"/>
        <dbReference type="EC" id="2.7.7.6"/>
    </reaction>
</comment>
<comment type="subunit">
    <text evidence="1">Homodimer. The RNAP catalytic core consists of 2 alpha, 1 beta, 1 beta' and 1 omega subunit. When a sigma factor is associated with the core the holoenzyme is formed, which can initiate transcription.</text>
</comment>
<comment type="domain">
    <text evidence="1">The N-terminal domain is essential for RNAP assembly and basal transcription, whereas the C-terminal domain is involved in interaction with transcriptional regulators and with upstream promoter elements.</text>
</comment>
<comment type="similarity">
    <text evidence="1">Belongs to the RNA polymerase alpha chain family.</text>
</comment>
<protein>
    <recommendedName>
        <fullName evidence="1">DNA-directed RNA polymerase subunit alpha</fullName>
        <shortName evidence="1">RNAP subunit alpha</shortName>
        <ecNumber evidence="1">2.7.7.6</ecNumber>
    </recommendedName>
    <alternativeName>
        <fullName evidence="1">RNA polymerase subunit alpha</fullName>
    </alternativeName>
    <alternativeName>
        <fullName evidence="1">Transcriptase subunit alpha</fullName>
    </alternativeName>
</protein>
<name>RPOA_SHESA</name>
<sequence length="329" mass="36160">MQGSVTEFLKPRLVDIEQVNSTRAKVTLEPLERGFGHTLGNALRRILLSSMPGCAVTEVEIDGVLHEYSSKEGVQEDILEILLNLKGLAVTIEGKDEAMLTLSKSGAGPVIAADITHDGDVTIVNPDHVICHLTGNNDISMRIRVERGRGYVPASARAQTEDDDRPIGRLLVDASFSPVARIAYNVEAARVEQRTDLDKLVIDMTTNGTIDPEEAIRRSATILAEQLDAFVELRDVTEPEMKEEKPEFDPILLRPVDDLELTVRSANCLKAEAIHYIGDLVQRTEVELLKTPNLGKKSLTEIKDVLASRGLSLGMRLENWPPASLADDL</sequence>
<reference key="1">
    <citation type="submission" date="2006-09" db="EMBL/GenBank/DDBJ databases">
        <title>Complete sequence of chromosome 1 of Shewanella sp. ANA-3.</title>
        <authorList>
            <person name="Copeland A."/>
            <person name="Lucas S."/>
            <person name="Lapidus A."/>
            <person name="Barry K."/>
            <person name="Detter J.C."/>
            <person name="Glavina del Rio T."/>
            <person name="Hammon N."/>
            <person name="Israni S."/>
            <person name="Dalin E."/>
            <person name="Tice H."/>
            <person name="Pitluck S."/>
            <person name="Chertkov O."/>
            <person name="Brettin T."/>
            <person name="Bruce D."/>
            <person name="Han C."/>
            <person name="Tapia R."/>
            <person name="Gilna P."/>
            <person name="Schmutz J."/>
            <person name="Larimer F."/>
            <person name="Land M."/>
            <person name="Hauser L."/>
            <person name="Kyrpides N."/>
            <person name="Kim E."/>
            <person name="Newman D."/>
            <person name="Salticov C."/>
            <person name="Konstantinidis K."/>
            <person name="Klappenback J."/>
            <person name="Tiedje J."/>
            <person name="Richardson P."/>
        </authorList>
    </citation>
    <scope>NUCLEOTIDE SEQUENCE [LARGE SCALE GENOMIC DNA]</scope>
    <source>
        <strain>ANA-3</strain>
    </source>
</reference>
<dbReference type="EC" id="2.7.7.6" evidence="1"/>
<dbReference type="EMBL" id="CP000469">
    <property type="protein sequence ID" value="ABK46468.1"/>
    <property type="molecule type" value="Genomic_DNA"/>
</dbReference>
<dbReference type="RefSeq" id="WP_011070632.1">
    <property type="nucleotide sequence ID" value="NC_008577.1"/>
</dbReference>
<dbReference type="SMR" id="A0KRP9"/>
<dbReference type="STRING" id="94122.Shewana3_0224"/>
<dbReference type="GeneID" id="94726211"/>
<dbReference type="KEGG" id="shn:Shewana3_0224"/>
<dbReference type="eggNOG" id="COG0202">
    <property type="taxonomic scope" value="Bacteria"/>
</dbReference>
<dbReference type="HOGENOM" id="CLU_053084_0_0_6"/>
<dbReference type="OrthoDB" id="9805706at2"/>
<dbReference type="Proteomes" id="UP000002589">
    <property type="component" value="Chromosome"/>
</dbReference>
<dbReference type="GO" id="GO:0005737">
    <property type="term" value="C:cytoplasm"/>
    <property type="evidence" value="ECO:0007669"/>
    <property type="project" value="UniProtKB-ARBA"/>
</dbReference>
<dbReference type="GO" id="GO:0000428">
    <property type="term" value="C:DNA-directed RNA polymerase complex"/>
    <property type="evidence" value="ECO:0007669"/>
    <property type="project" value="UniProtKB-KW"/>
</dbReference>
<dbReference type="GO" id="GO:0003677">
    <property type="term" value="F:DNA binding"/>
    <property type="evidence" value="ECO:0007669"/>
    <property type="project" value="UniProtKB-UniRule"/>
</dbReference>
<dbReference type="GO" id="GO:0003899">
    <property type="term" value="F:DNA-directed RNA polymerase activity"/>
    <property type="evidence" value="ECO:0007669"/>
    <property type="project" value="UniProtKB-UniRule"/>
</dbReference>
<dbReference type="GO" id="GO:0046983">
    <property type="term" value="F:protein dimerization activity"/>
    <property type="evidence" value="ECO:0007669"/>
    <property type="project" value="InterPro"/>
</dbReference>
<dbReference type="GO" id="GO:0006351">
    <property type="term" value="P:DNA-templated transcription"/>
    <property type="evidence" value="ECO:0007669"/>
    <property type="project" value="UniProtKB-UniRule"/>
</dbReference>
<dbReference type="CDD" id="cd06928">
    <property type="entry name" value="RNAP_alpha_NTD"/>
    <property type="match status" value="1"/>
</dbReference>
<dbReference type="FunFam" id="1.10.150.20:FF:000001">
    <property type="entry name" value="DNA-directed RNA polymerase subunit alpha"/>
    <property type="match status" value="1"/>
</dbReference>
<dbReference type="FunFam" id="2.170.120.12:FF:000001">
    <property type="entry name" value="DNA-directed RNA polymerase subunit alpha"/>
    <property type="match status" value="1"/>
</dbReference>
<dbReference type="Gene3D" id="1.10.150.20">
    <property type="entry name" value="5' to 3' exonuclease, C-terminal subdomain"/>
    <property type="match status" value="1"/>
</dbReference>
<dbReference type="Gene3D" id="2.170.120.12">
    <property type="entry name" value="DNA-directed RNA polymerase, insert domain"/>
    <property type="match status" value="1"/>
</dbReference>
<dbReference type="Gene3D" id="3.30.1360.10">
    <property type="entry name" value="RNA polymerase, RBP11-like subunit"/>
    <property type="match status" value="1"/>
</dbReference>
<dbReference type="HAMAP" id="MF_00059">
    <property type="entry name" value="RNApol_bact_RpoA"/>
    <property type="match status" value="1"/>
</dbReference>
<dbReference type="InterPro" id="IPR011262">
    <property type="entry name" value="DNA-dir_RNA_pol_insert"/>
</dbReference>
<dbReference type="InterPro" id="IPR011263">
    <property type="entry name" value="DNA-dir_RNA_pol_RpoA/D/Rpb3"/>
</dbReference>
<dbReference type="InterPro" id="IPR011773">
    <property type="entry name" value="DNA-dir_RpoA"/>
</dbReference>
<dbReference type="InterPro" id="IPR036603">
    <property type="entry name" value="RBP11-like"/>
</dbReference>
<dbReference type="InterPro" id="IPR011260">
    <property type="entry name" value="RNAP_asu_C"/>
</dbReference>
<dbReference type="InterPro" id="IPR036643">
    <property type="entry name" value="RNApol_insert_sf"/>
</dbReference>
<dbReference type="NCBIfam" id="NF003513">
    <property type="entry name" value="PRK05182.1-2"/>
    <property type="match status" value="1"/>
</dbReference>
<dbReference type="NCBIfam" id="NF003519">
    <property type="entry name" value="PRK05182.2-5"/>
    <property type="match status" value="1"/>
</dbReference>
<dbReference type="NCBIfam" id="TIGR02027">
    <property type="entry name" value="rpoA"/>
    <property type="match status" value="1"/>
</dbReference>
<dbReference type="Pfam" id="PF01000">
    <property type="entry name" value="RNA_pol_A_bac"/>
    <property type="match status" value="1"/>
</dbReference>
<dbReference type="Pfam" id="PF03118">
    <property type="entry name" value="RNA_pol_A_CTD"/>
    <property type="match status" value="1"/>
</dbReference>
<dbReference type="Pfam" id="PF01193">
    <property type="entry name" value="RNA_pol_L"/>
    <property type="match status" value="1"/>
</dbReference>
<dbReference type="SMART" id="SM00662">
    <property type="entry name" value="RPOLD"/>
    <property type="match status" value="1"/>
</dbReference>
<dbReference type="SUPFAM" id="SSF47789">
    <property type="entry name" value="C-terminal domain of RNA polymerase alpha subunit"/>
    <property type="match status" value="1"/>
</dbReference>
<dbReference type="SUPFAM" id="SSF56553">
    <property type="entry name" value="Insert subdomain of RNA polymerase alpha subunit"/>
    <property type="match status" value="1"/>
</dbReference>
<dbReference type="SUPFAM" id="SSF55257">
    <property type="entry name" value="RBP11-like subunits of RNA polymerase"/>
    <property type="match status" value="1"/>
</dbReference>
<gene>
    <name evidence="1" type="primary">rpoA</name>
    <name type="ordered locus">Shewana3_0224</name>
</gene>
<organism>
    <name type="scientific">Shewanella sp. (strain ANA-3)</name>
    <dbReference type="NCBI Taxonomy" id="94122"/>
    <lineage>
        <taxon>Bacteria</taxon>
        <taxon>Pseudomonadati</taxon>
        <taxon>Pseudomonadota</taxon>
        <taxon>Gammaproteobacteria</taxon>
        <taxon>Alteromonadales</taxon>
        <taxon>Shewanellaceae</taxon>
        <taxon>Shewanella</taxon>
    </lineage>
</organism>
<evidence type="ECO:0000255" key="1">
    <source>
        <dbReference type="HAMAP-Rule" id="MF_00059"/>
    </source>
</evidence>